<feature type="chain" id="PRO_0000267316" description="Nucleoside triphosphate pyrophosphatase">
    <location>
        <begin position="1"/>
        <end position="197"/>
    </location>
</feature>
<feature type="active site" description="Proton acceptor" evidence="1">
    <location>
        <position position="74"/>
    </location>
</feature>
<sequence length="197" mass="21761">MKLILASASSARRSMLEQAGIDAESIPAAVDEDMVKQSMRAEGASAAETATALAHLKAERISRRYPDSVVIGSDQLLVCEGAWFDKAPDLERARARLLDFRGRAHHLVTSVVCAKGGSRLWHHVETPCLHMRRFSEDFLNRYLAQEGEALLGSVGCYRLEGPGIQLFDRIEGDYFSILGMPLLPLLGFLRQHQALTV</sequence>
<gene>
    <name type="ordered locus">GbCGDNIH1_0004</name>
</gene>
<proteinExistence type="inferred from homology"/>
<name>NTPP_GRABC</name>
<evidence type="ECO:0000255" key="1">
    <source>
        <dbReference type="HAMAP-Rule" id="MF_00528"/>
    </source>
</evidence>
<comment type="function">
    <text evidence="1">Nucleoside triphosphate pyrophosphatase. May have a dual role in cell division arrest and in preventing the incorporation of modified nucleotides into cellular nucleic acids.</text>
</comment>
<comment type="catalytic activity">
    <reaction evidence="1">
        <text>a ribonucleoside 5'-triphosphate + H2O = a ribonucleoside 5'-phosphate + diphosphate + H(+)</text>
        <dbReference type="Rhea" id="RHEA:23996"/>
        <dbReference type="ChEBI" id="CHEBI:15377"/>
        <dbReference type="ChEBI" id="CHEBI:15378"/>
        <dbReference type="ChEBI" id="CHEBI:33019"/>
        <dbReference type="ChEBI" id="CHEBI:58043"/>
        <dbReference type="ChEBI" id="CHEBI:61557"/>
        <dbReference type="EC" id="3.6.1.9"/>
    </reaction>
</comment>
<comment type="catalytic activity">
    <reaction evidence="1">
        <text>a 2'-deoxyribonucleoside 5'-triphosphate + H2O = a 2'-deoxyribonucleoside 5'-phosphate + diphosphate + H(+)</text>
        <dbReference type="Rhea" id="RHEA:44644"/>
        <dbReference type="ChEBI" id="CHEBI:15377"/>
        <dbReference type="ChEBI" id="CHEBI:15378"/>
        <dbReference type="ChEBI" id="CHEBI:33019"/>
        <dbReference type="ChEBI" id="CHEBI:61560"/>
        <dbReference type="ChEBI" id="CHEBI:65317"/>
        <dbReference type="EC" id="3.6.1.9"/>
    </reaction>
</comment>
<comment type="cofactor">
    <cofactor evidence="1">
        <name>a divalent metal cation</name>
        <dbReference type="ChEBI" id="CHEBI:60240"/>
    </cofactor>
</comment>
<comment type="subcellular location">
    <subcellularLocation>
        <location evidence="1">Cytoplasm</location>
    </subcellularLocation>
</comment>
<comment type="similarity">
    <text evidence="1">Belongs to the Maf family.</text>
</comment>
<protein>
    <recommendedName>
        <fullName evidence="1">Nucleoside triphosphate pyrophosphatase</fullName>
        <ecNumber evidence="1">3.6.1.9</ecNumber>
    </recommendedName>
    <alternativeName>
        <fullName evidence="1">Nucleotide pyrophosphatase</fullName>
        <shortName evidence="1">Nucleotide PPase</shortName>
    </alternativeName>
</protein>
<accession>Q0BWA0</accession>
<keyword id="KW-0963">Cytoplasm</keyword>
<keyword id="KW-0378">Hydrolase</keyword>
<keyword id="KW-0546">Nucleotide metabolism</keyword>
<keyword id="KW-1185">Reference proteome</keyword>
<dbReference type="EC" id="3.6.1.9" evidence="1"/>
<dbReference type="EMBL" id="CP000394">
    <property type="protein sequence ID" value="ABI60902.1"/>
    <property type="molecule type" value="Genomic_DNA"/>
</dbReference>
<dbReference type="RefSeq" id="WP_011630712.1">
    <property type="nucleotide sequence ID" value="NC_008343.2"/>
</dbReference>
<dbReference type="SMR" id="Q0BWA0"/>
<dbReference type="STRING" id="391165.GbCGDNIH1_0004"/>
<dbReference type="KEGG" id="gbe:GbCGDNIH1_0004"/>
<dbReference type="eggNOG" id="COG0424">
    <property type="taxonomic scope" value="Bacteria"/>
</dbReference>
<dbReference type="HOGENOM" id="CLU_040416_1_1_5"/>
<dbReference type="OrthoDB" id="9813962at2"/>
<dbReference type="Proteomes" id="UP000001963">
    <property type="component" value="Chromosome"/>
</dbReference>
<dbReference type="GO" id="GO:0005737">
    <property type="term" value="C:cytoplasm"/>
    <property type="evidence" value="ECO:0007669"/>
    <property type="project" value="UniProtKB-SubCell"/>
</dbReference>
<dbReference type="GO" id="GO:0047429">
    <property type="term" value="F:nucleoside triphosphate diphosphatase activity"/>
    <property type="evidence" value="ECO:0007669"/>
    <property type="project" value="UniProtKB-EC"/>
</dbReference>
<dbReference type="GO" id="GO:0009117">
    <property type="term" value="P:nucleotide metabolic process"/>
    <property type="evidence" value="ECO:0007669"/>
    <property type="project" value="UniProtKB-KW"/>
</dbReference>
<dbReference type="CDD" id="cd00555">
    <property type="entry name" value="Maf"/>
    <property type="match status" value="1"/>
</dbReference>
<dbReference type="Gene3D" id="3.90.950.10">
    <property type="match status" value="1"/>
</dbReference>
<dbReference type="HAMAP" id="MF_00528">
    <property type="entry name" value="Maf"/>
    <property type="match status" value="1"/>
</dbReference>
<dbReference type="InterPro" id="IPR029001">
    <property type="entry name" value="ITPase-like_fam"/>
</dbReference>
<dbReference type="InterPro" id="IPR003697">
    <property type="entry name" value="Maf-like"/>
</dbReference>
<dbReference type="PANTHER" id="PTHR43213">
    <property type="entry name" value="BIFUNCTIONAL DTTP/UTP PYROPHOSPHATASE/METHYLTRANSFERASE PROTEIN-RELATED"/>
    <property type="match status" value="1"/>
</dbReference>
<dbReference type="PANTHER" id="PTHR43213:SF5">
    <property type="entry name" value="BIFUNCTIONAL DTTP_UTP PYROPHOSPHATASE_METHYLTRANSFERASE PROTEIN-RELATED"/>
    <property type="match status" value="1"/>
</dbReference>
<dbReference type="Pfam" id="PF02545">
    <property type="entry name" value="Maf"/>
    <property type="match status" value="1"/>
</dbReference>
<dbReference type="PIRSF" id="PIRSF006305">
    <property type="entry name" value="Maf"/>
    <property type="match status" value="1"/>
</dbReference>
<dbReference type="SUPFAM" id="SSF52972">
    <property type="entry name" value="ITPase-like"/>
    <property type="match status" value="1"/>
</dbReference>
<reference key="1">
    <citation type="journal article" date="2007" name="J. Bacteriol.">
        <title>Genome sequence analysis of the emerging human pathogenic acetic acid bacterium Granulibacter bethesdensis.</title>
        <authorList>
            <person name="Greenberg D.E."/>
            <person name="Porcella S.F."/>
            <person name="Zelazny A.M."/>
            <person name="Virtaneva K."/>
            <person name="Sturdevant D.E."/>
            <person name="Kupko J.J. III"/>
            <person name="Barbian K.D."/>
            <person name="Babar A."/>
            <person name="Dorward D.W."/>
            <person name="Holland S.M."/>
        </authorList>
    </citation>
    <scope>NUCLEOTIDE SEQUENCE [LARGE SCALE GENOMIC DNA]</scope>
    <source>
        <strain>ATCC BAA-1260 / CGDNIH1</strain>
    </source>
</reference>
<organism>
    <name type="scientific">Granulibacter bethesdensis (strain ATCC BAA-1260 / CGDNIH1)</name>
    <dbReference type="NCBI Taxonomy" id="391165"/>
    <lineage>
        <taxon>Bacteria</taxon>
        <taxon>Pseudomonadati</taxon>
        <taxon>Pseudomonadota</taxon>
        <taxon>Alphaproteobacteria</taxon>
        <taxon>Acetobacterales</taxon>
        <taxon>Acetobacteraceae</taxon>
        <taxon>Granulibacter</taxon>
    </lineage>
</organism>